<keyword id="KW-0125">Carotenoid biosynthesis</keyword>
<keyword id="KW-0460">Magnesium</keyword>
<keyword id="KW-0479">Metal-binding</keyword>
<keyword id="KW-0808">Transferase</keyword>
<keyword id="KW-0843">Virulence</keyword>
<dbReference type="EC" id="2.5.1.96" evidence="2"/>
<dbReference type="EMBL" id="AJ938182">
    <property type="protein sequence ID" value="CAI82123.1"/>
    <property type="molecule type" value="Genomic_DNA"/>
</dbReference>
<dbReference type="RefSeq" id="WP_000178313.1">
    <property type="nucleotide sequence ID" value="NC_007622.1"/>
</dbReference>
<dbReference type="SMR" id="Q2YWE7"/>
<dbReference type="KEGG" id="sab:SAB2435c"/>
<dbReference type="HOGENOM" id="CLU_037269_1_3_9"/>
<dbReference type="UniPathway" id="UPA00029">
    <property type="reaction ID" value="UER00556"/>
</dbReference>
<dbReference type="GO" id="GO:0004311">
    <property type="term" value="F:geranylgeranyl diphosphate synthase activity"/>
    <property type="evidence" value="ECO:0007669"/>
    <property type="project" value="InterPro"/>
</dbReference>
<dbReference type="GO" id="GO:0046872">
    <property type="term" value="F:metal ion binding"/>
    <property type="evidence" value="ECO:0007669"/>
    <property type="project" value="UniProtKB-KW"/>
</dbReference>
<dbReference type="GO" id="GO:0051996">
    <property type="term" value="F:squalene synthase [NAD(P)H] activity"/>
    <property type="evidence" value="ECO:0007669"/>
    <property type="project" value="InterPro"/>
</dbReference>
<dbReference type="GO" id="GO:0016117">
    <property type="term" value="P:carotenoid biosynthetic process"/>
    <property type="evidence" value="ECO:0007669"/>
    <property type="project" value="UniProtKB-KW"/>
</dbReference>
<dbReference type="CDD" id="cd00683">
    <property type="entry name" value="Trans_IPPS_HH"/>
    <property type="match status" value="1"/>
</dbReference>
<dbReference type="Gene3D" id="1.10.600.10">
    <property type="entry name" value="Farnesyl Diphosphate Synthase"/>
    <property type="match status" value="1"/>
</dbReference>
<dbReference type="InterPro" id="IPR008949">
    <property type="entry name" value="Isoprenoid_synthase_dom_sf"/>
</dbReference>
<dbReference type="InterPro" id="IPR002060">
    <property type="entry name" value="Squ/phyt_synthse"/>
</dbReference>
<dbReference type="InterPro" id="IPR019845">
    <property type="entry name" value="Squalene/phytoene_synthase_CS"/>
</dbReference>
<dbReference type="InterPro" id="IPR044843">
    <property type="entry name" value="Trans_IPPS_bact-type"/>
</dbReference>
<dbReference type="InterPro" id="IPR033904">
    <property type="entry name" value="Trans_IPPS_HH"/>
</dbReference>
<dbReference type="PANTHER" id="PTHR31480">
    <property type="entry name" value="BIFUNCTIONAL LYCOPENE CYCLASE/PHYTOENE SYNTHASE"/>
    <property type="match status" value="1"/>
</dbReference>
<dbReference type="Pfam" id="PF00494">
    <property type="entry name" value="SQS_PSY"/>
    <property type="match status" value="1"/>
</dbReference>
<dbReference type="SFLD" id="SFLDS00005">
    <property type="entry name" value="Isoprenoid_Synthase_Type_I"/>
    <property type="match status" value="1"/>
</dbReference>
<dbReference type="SFLD" id="SFLDG01212">
    <property type="entry name" value="Phytoene_synthase_like"/>
    <property type="match status" value="1"/>
</dbReference>
<dbReference type="SUPFAM" id="SSF48576">
    <property type="entry name" value="Terpenoid synthases"/>
    <property type="match status" value="1"/>
</dbReference>
<dbReference type="PROSITE" id="PS01044">
    <property type="entry name" value="SQUALEN_PHYTOEN_SYN_1"/>
    <property type="match status" value="1"/>
</dbReference>
<organism>
    <name type="scientific">Staphylococcus aureus (strain bovine RF122 / ET3-1)</name>
    <dbReference type="NCBI Taxonomy" id="273036"/>
    <lineage>
        <taxon>Bacteria</taxon>
        <taxon>Bacillati</taxon>
        <taxon>Bacillota</taxon>
        <taxon>Bacilli</taxon>
        <taxon>Bacillales</taxon>
        <taxon>Staphylococcaceae</taxon>
        <taxon>Staphylococcus</taxon>
    </lineage>
</organism>
<sequence length="287" mass="34294">MTMMDMNFKYCHKIMKKHSKSFSYAFDLLPEDQRKAVWAIYAVCRKIDDSIDVYGDIQFLNQIKEDIQSIEKYPYEHHHFQSDRRIMMALQHVAQHKNIAFQSFYNLIDTVYKDQHFTMFETDAELFGYCYGVAGTVGEVLTPILSDHETHQTYDVARRLGESLQLINILRDVGEDFENERIYFSKQRLKQYEVDIAEVYQNGVNNHYIDLWEYYAAIAEKDFRDVMDQIKVFSIEAQPIIELAARIYIEILDEVRQASYTLHERVFVYKRKKAKLFHEINSKYHRI</sequence>
<reference key="1">
    <citation type="journal article" date="2007" name="PLoS ONE">
        <title>Molecular correlates of host specialization in Staphylococcus aureus.</title>
        <authorList>
            <person name="Herron-Olson L."/>
            <person name="Fitzgerald J.R."/>
            <person name="Musser J.M."/>
            <person name="Kapur V."/>
        </authorList>
    </citation>
    <scope>NUCLEOTIDE SEQUENCE [LARGE SCALE GENOMIC DNA]</scope>
    <source>
        <strain>bovine RF122 / ET3-1</strain>
    </source>
</reference>
<name>CRTM_STAAB</name>
<comment type="function">
    <text evidence="2">Involved in the biosynthesis of the yellow-orange carotenoid staphyloxanthin, which plays a role in the virulence via its protective function against oxidative stress. Catalyzes the head-to-head condensation of two molecules of farnesyl diphosphate (FPP) into the colorless C(30) carotenoid 4,4'-diapophytoene (dehydrosqualene).</text>
</comment>
<comment type="catalytic activity">
    <reaction evidence="2">
        <text>2 (2E,6E)-farnesyl diphosphate = 15-cis-4,4'-diapophytoene + 2 diphosphate</text>
        <dbReference type="Rhea" id="RHEA:31547"/>
        <dbReference type="ChEBI" id="CHEBI:33019"/>
        <dbReference type="ChEBI" id="CHEBI:62738"/>
        <dbReference type="ChEBI" id="CHEBI:175763"/>
        <dbReference type="EC" id="2.5.1.96"/>
    </reaction>
</comment>
<comment type="cofactor">
    <cofactor evidence="1">
        <name>Mg(2+)</name>
        <dbReference type="ChEBI" id="CHEBI:18420"/>
    </cofactor>
    <text evidence="1">Binds 2 Mg(2+) ions per subunit.</text>
</comment>
<comment type="pathway">
    <text evidence="2">Carotenoid biosynthesis; staphyloxanthin biosynthesis; staphyloxanthin from farnesyl diphosphate: step 1/5.</text>
</comment>
<comment type="similarity">
    <text evidence="3">Belongs to the phytoene/squalene synthase family. CrtM subfamily.</text>
</comment>
<gene>
    <name type="primary">crtM</name>
    <name type="ordered locus">SAB2435c</name>
</gene>
<feature type="chain" id="PRO_0000282618" description="4,4'-diapophytoene synthase">
    <location>
        <begin position="1"/>
        <end position="287"/>
    </location>
</feature>
<feature type="binding site" evidence="1">
    <location>
        <begin position="18"/>
        <end position="21"/>
    </location>
    <ligand>
        <name>(2E,6E)-farnesyl diphosphate</name>
        <dbReference type="ChEBI" id="CHEBI:175763"/>
        <label>1</label>
    </ligand>
</feature>
<feature type="binding site" evidence="1">
    <location>
        <position position="41"/>
    </location>
    <ligand>
        <name>(2E,6E)-farnesyl diphosphate</name>
        <dbReference type="ChEBI" id="CHEBI:175763"/>
        <label>1</label>
    </ligand>
</feature>
<feature type="binding site" evidence="1">
    <location>
        <position position="45"/>
    </location>
    <ligand>
        <name>(2E,6E)-farnesyl diphosphate</name>
        <dbReference type="ChEBI" id="CHEBI:175763"/>
        <label>1</label>
    </ligand>
</feature>
<feature type="binding site" evidence="1">
    <location>
        <position position="45"/>
    </location>
    <ligand>
        <name>(2E,6E)-farnesyl diphosphate</name>
        <dbReference type="ChEBI" id="CHEBI:175763"/>
        <label>2</label>
    </ligand>
</feature>
<feature type="binding site" evidence="1">
    <location>
        <position position="48"/>
    </location>
    <ligand>
        <name>Mg(2+)</name>
        <dbReference type="ChEBI" id="CHEBI:18420"/>
        <label>1</label>
    </ligand>
</feature>
<feature type="binding site" evidence="1">
    <location>
        <position position="52"/>
    </location>
    <ligand>
        <name>Mg(2+)</name>
        <dbReference type="ChEBI" id="CHEBI:18420"/>
        <label>1</label>
    </ligand>
</feature>
<feature type="binding site" evidence="1">
    <location>
        <position position="165"/>
    </location>
    <ligand>
        <name>(2E,6E)-farnesyl diphosphate</name>
        <dbReference type="ChEBI" id="CHEBI:175763"/>
        <label>2</label>
    </ligand>
</feature>
<feature type="binding site" evidence="1">
    <location>
        <position position="168"/>
    </location>
    <ligand>
        <name>Mg(2+)</name>
        <dbReference type="ChEBI" id="CHEBI:18420"/>
        <label>2</label>
    </ligand>
</feature>
<feature type="binding site" evidence="1">
    <location>
        <position position="171"/>
    </location>
    <ligand>
        <name>(2E,6E)-farnesyl diphosphate</name>
        <dbReference type="ChEBI" id="CHEBI:175763"/>
        <label>1</label>
    </ligand>
</feature>
<feature type="binding site" evidence="1">
    <location>
        <position position="172"/>
    </location>
    <ligand>
        <name>Mg(2+)</name>
        <dbReference type="ChEBI" id="CHEBI:18420"/>
        <label>2</label>
    </ligand>
</feature>
<feature type="binding site" evidence="1">
    <location>
        <position position="248"/>
    </location>
    <ligand>
        <name>(2E,6E)-farnesyl diphosphate</name>
        <dbReference type="ChEBI" id="CHEBI:175763"/>
        <label>1</label>
    </ligand>
</feature>
<accession>Q2YWE7</accession>
<evidence type="ECO:0000250" key="1">
    <source>
        <dbReference type="UniProtKB" id="A9JQL9"/>
    </source>
</evidence>
<evidence type="ECO:0000250" key="2">
    <source>
        <dbReference type="UniProtKB" id="Q2FV59"/>
    </source>
</evidence>
<evidence type="ECO:0000305" key="3"/>
<protein>
    <recommendedName>
        <fullName evidence="2">4,4'-diapophytoene synthase</fullName>
        <shortName evidence="2">DAP synthase</shortName>
        <ecNumber evidence="2">2.5.1.96</ecNumber>
    </recommendedName>
    <alternativeName>
        <fullName evidence="2">C30 carotenoid synthase</fullName>
    </alternativeName>
    <alternativeName>
        <fullName evidence="2">Dehydrosqualene synthase</fullName>
    </alternativeName>
</protein>
<proteinExistence type="inferred from homology"/>